<proteinExistence type="inferred from homology"/>
<protein>
    <recommendedName>
        <fullName evidence="1">Ureidoglycolate lyase</fullName>
        <ecNumber evidence="1">4.3.2.3</ecNumber>
    </recommendedName>
    <alternativeName>
        <fullName evidence="1">Ureidoglycolatase</fullName>
    </alternativeName>
</protein>
<reference key="1">
    <citation type="journal article" date="2010" name="Appl. Environ. Microbiol.">
        <title>Conserved symbiotic plasmid DNA sequences in the multireplicon pangenomic structure of Rhizobium etli.</title>
        <authorList>
            <person name="Gonzalez V."/>
            <person name="Acosta J.L."/>
            <person name="Santamaria R.I."/>
            <person name="Bustos P."/>
            <person name="Fernandez J.L."/>
            <person name="Hernandez Gonzalez I.L."/>
            <person name="Diaz R."/>
            <person name="Flores M."/>
            <person name="Palacios R."/>
            <person name="Mora J."/>
            <person name="Davila G."/>
        </authorList>
    </citation>
    <scope>NUCLEOTIDE SEQUENCE [LARGE SCALE GENOMIC DNA]</scope>
    <source>
        <strain>CIAT 652</strain>
    </source>
</reference>
<organism>
    <name type="scientific">Rhizobium etli (strain CIAT 652)</name>
    <dbReference type="NCBI Taxonomy" id="491916"/>
    <lineage>
        <taxon>Bacteria</taxon>
        <taxon>Pseudomonadati</taxon>
        <taxon>Pseudomonadota</taxon>
        <taxon>Alphaproteobacteria</taxon>
        <taxon>Hyphomicrobiales</taxon>
        <taxon>Rhizobiaceae</taxon>
        <taxon>Rhizobium/Agrobacterium group</taxon>
        <taxon>Rhizobium</taxon>
    </lineage>
</organism>
<keyword id="KW-0456">Lyase</keyword>
<keyword id="KW-0659">Purine metabolism</keyword>
<gene>
    <name evidence="1" type="primary">allA</name>
    <name type="ordered locus">RHECIAT_CH0003361</name>
</gene>
<feature type="chain" id="PRO_1000130420" description="Ureidoglycolate lyase">
    <location>
        <begin position="1"/>
        <end position="166"/>
    </location>
</feature>
<accession>B3PW72</accession>
<sequence>MPEFLDIRPLTRLAFAPFGEVIEADPASMRLINGGTTERFHALAAAEAAGEGARVIINLFRGQPRSFPYAVDMMERHPFGSQSFSPVSGRPFLVVVSEDEGGRPGRPQVFLARGDQGVNYRRNVWHHPLMALGQASDFLVVDRDGPGNNLEEFFFETPFVIKEPAS</sequence>
<dbReference type="EC" id="4.3.2.3" evidence="1"/>
<dbReference type="EMBL" id="CP001074">
    <property type="protein sequence ID" value="ACE92309.1"/>
    <property type="molecule type" value="Genomic_DNA"/>
</dbReference>
<dbReference type="SMR" id="B3PW72"/>
<dbReference type="KEGG" id="rec:RHECIAT_CH0003361"/>
<dbReference type="eggNOG" id="COG3194">
    <property type="taxonomic scope" value="Bacteria"/>
</dbReference>
<dbReference type="HOGENOM" id="CLU_070848_1_0_5"/>
<dbReference type="UniPathway" id="UPA00395"/>
<dbReference type="Proteomes" id="UP000008817">
    <property type="component" value="Chromosome"/>
</dbReference>
<dbReference type="GO" id="GO:0004848">
    <property type="term" value="F:ureidoglycolate hydrolase activity"/>
    <property type="evidence" value="ECO:0007669"/>
    <property type="project" value="InterPro"/>
</dbReference>
<dbReference type="GO" id="GO:0050385">
    <property type="term" value="F:ureidoglycolate lyase activity"/>
    <property type="evidence" value="ECO:0007669"/>
    <property type="project" value="UniProtKB-UniRule"/>
</dbReference>
<dbReference type="GO" id="GO:0000256">
    <property type="term" value="P:allantoin catabolic process"/>
    <property type="evidence" value="ECO:0007669"/>
    <property type="project" value="UniProtKB-UniRule"/>
</dbReference>
<dbReference type="GO" id="GO:0006145">
    <property type="term" value="P:purine nucleobase catabolic process"/>
    <property type="evidence" value="ECO:0007669"/>
    <property type="project" value="UniProtKB-UniRule"/>
</dbReference>
<dbReference type="CDD" id="cd20298">
    <property type="entry name" value="cupin_UAH"/>
    <property type="match status" value="1"/>
</dbReference>
<dbReference type="Gene3D" id="2.60.120.480">
    <property type="entry name" value="Ureidoglycolate hydrolase"/>
    <property type="match status" value="1"/>
</dbReference>
<dbReference type="HAMAP" id="MF_00616">
    <property type="entry name" value="Ureidogly_lyase"/>
    <property type="match status" value="1"/>
</dbReference>
<dbReference type="InterPro" id="IPR011051">
    <property type="entry name" value="RmlC_Cupin_sf"/>
</dbReference>
<dbReference type="InterPro" id="IPR047233">
    <property type="entry name" value="UAH_cupin"/>
</dbReference>
<dbReference type="InterPro" id="IPR007247">
    <property type="entry name" value="Ureidogly_lyase"/>
</dbReference>
<dbReference type="InterPro" id="IPR023525">
    <property type="entry name" value="Ureidogly_lyase_bac"/>
</dbReference>
<dbReference type="InterPro" id="IPR024060">
    <property type="entry name" value="Ureidoglycolate_lyase_dom_sf"/>
</dbReference>
<dbReference type="NCBIfam" id="NF002951">
    <property type="entry name" value="PRK03606.2-2"/>
    <property type="match status" value="1"/>
</dbReference>
<dbReference type="NCBIfam" id="NF009932">
    <property type="entry name" value="PRK13395.1"/>
    <property type="match status" value="1"/>
</dbReference>
<dbReference type="PANTHER" id="PTHR21221">
    <property type="entry name" value="UREIDOGLYCOLATE HYDROLASE"/>
    <property type="match status" value="1"/>
</dbReference>
<dbReference type="PANTHER" id="PTHR21221:SF1">
    <property type="entry name" value="UREIDOGLYCOLATE LYASE"/>
    <property type="match status" value="1"/>
</dbReference>
<dbReference type="Pfam" id="PF04115">
    <property type="entry name" value="Ureidogly_lyase"/>
    <property type="match status" value="1"/>
</dbReference>
<dbReference type="PIRSF" id="PIRSF017306">
    <property type="entry name" value="Ureidogly_hydro"/>
    <property type="match status" value="1"/>
</dbReference>
<dbReference type="SUPFAM" id="SSF51182">
    <property type="entry name" value="RmlC-like cupins"/>
    <property type="match status" value="1"/>
</dbReference>
<evidence type="ECO:0000255" key="1">
    <source>
        <dbReference type="HAMAP-Rule" id="MF_00616"/>
    </source>
</evidence>
<comment type="function">
    <text evidence="1">Catalyzes the catabolism of the allantoin degradation intermediate (S)-ureidoglycolate, generating urea and glyoxylate. Involved in the utilization of allantoin as nitrogen source.</text>
</comment>
<comment type="catalytic activity">
    <reaction evidence="1">
        <text>(S)-ureidoglycolate = urea + glyoxylate</text>
        <dbReference type="Rhea" id="RHEA:11304"/>
        <dbReference type="ChEBI" id="CHEBI:16199"/>
        <dbReference type="ChEBI" id="CHEBI:36655"/>
        <dbReference type="ChEBI" id="CHEBI:57296"/>
        <dbReference type="EC" id="4.3.2.3"/>
    </reaction>
</comment>
<comment type="cofactor">
    <cofactor evidence="1">
        <name>Ni(2+)</name>
        <dbReference type="ChEBI" id="CHEBI:49786"/>
    </cofactor>
</comment>
<comment type="pathway">
    <text evidence="1">Nitrogen metabolism; (S)-allantoin degradation.</text>
</comment>
<comment type="subunit">
    <text evidence="1">Homodimer.</text>
</comment>
<comment type="similarity">
    <text evidence="1">Belongs to the ureidoglycolate lyase family.</text>
</comment>
<name>ALLA_RHIE6</name>